<dbReference type="EC" id="1.14.12.17"/>
<dbReference type="EMBL" id="ACGJ01001771">
    <property type="protein sequence ID" value="EET01482.1"/>
    <property type="molecule type" value="Genomic_DNA"/>
</dbReference>
<dbReference type="SMR" id="C6LR75"/>
<dbReference type="EnsemblProtists" id="EET01482">
    <property type="protein sequence ID" value="EET01482"/>
    <property type="gene ID" value="GL50581_1257"/>
</dbReference>
<dbReference type="VEuPathDB" id="GiardiaDB:GL50581_1257"/>
<dbReference type="OMA" id="ADIHYEV"/>
<dbReference type="OrthoDB" id="436496at2759"/>
<dbReference type="Proteomes" id="UP000002488">
    <property type="component" value="Unassembled WGS sequence"/>
</dbReference>
<dbReference type="GO" id="GO:0071949">
    <property type="term" value="F:FAD binding"/>
    <property type="evidence" value="ECO:0007669"/>
    <property type="project" value="TreeGrafter"/>
</dbReference>
<dbReference type="GO" id="GO:0020037">
    <property type="term" value="F:heme binding"/>
    <property type="evidence" value="ECO:0007669"/>
    <property type="project" value="InterPro"/>
</dbReference>
<dbReference type="GO" id="GO:0046872">
    <property type="term" value="F:metal ion binding"/>
    <property type="evidence" value="ECO:0007669"/>
    <property type="project" value="UniProtKB-KW"/>
</dbReference>
<dbReference type="GO" id="GO:0008941">
    <property type="term" value="F:nitric oxide dioxygenase NAD(P)H activity"/>
    <property type="evidence" value="ECO:0007669"/>
    <property type="project" value="UniProtKB-EC"/>
</dbReference>
<dbReference type="GO" id="GO:0019825">
    <property type="term" value="F:oxygen binding"/>
    <property type="evidence" value="ECO:0007669"/>
    <property type="project" value="InterPro"/>
</dbReference>
<dbReference type="GO" id="GO:0005344">
    <property type="term" value="F:oxygen carrier activity"/>
    <property type="evidence" value="ECO:0007669"/>
    <property type="project" value="UniProtKB-KW"/>
</dbReference>
<dbReference type="GO" id="GO:0071500">
    <property type="term" value="P:cellular response to nitrosative stress"/>
    <property type="evidence" value="ECO:0007669"/>
    <property type="project" value="TreeGrafter"/>
</dbReference>
<dbReference type="GO" id="GO:0046210">
    <property type="term" value="P:nitric oxide catabolic process"/>
    <property type="evidence" value="ECO:0007669"/>
    <property type="project" value="TreeGrafter"/>
</dbReference>
<dbReference type="GO" id="GO:0009636">
    <property type="term" value="P:response to toxic substance"/>
    <property type="evidence" value="ECO:0007669"/>
    <property type="project" value="UniProtKB-KW"/>
</dbReference>
<dbReference type="CDD" id="cd06184">
    <property type="entry name" value="flavohem_like_fad_nad_binding"/>
    <property type="match status" value="1"/>
</dbReference>
<dbReference type="FunFam" id="3.40.50.80:FF:000010">
    <property type="entry name" value="Flavohemoprotein"/>
    <property type="match status" value="1"/>
</dbReference>
<dbReference type="Gene3D" id="1.10.490.10">
    <property type="entry name" value="Globins"/>
    <property type="match status" value="2"/>
</dbReference>
<dbReference type="Gene3D" id="3.40.50.80">
    <property type="entry name" value="Nucleotide-binding domain of ferredoxin-NADP reductase (FNR) module"/>
    <property type="match status" value="1"/>
</dbReference>
<dbReference type="Gene3D" id="2.40.30.10">
    <property type="entry name" value="Translation factors"/>
    <property type="match status" value="1"/>
</dbReference>
<dbReference type="InterPro" id="IPR008333">
    <property type="entry name" value="Cbr1-like_FAD-bd_dom"/>
</dbReference>
<dbReference type="InterPro" id="IPR017927">
    <property type="entry name" value="FAD-bd_FR_type"/>
</dbReference>
<dbReference type="InterPro" id="IPR039261">
    <property type="entry name" value="FNR_nucleotide-bd"/>
</dbReference>
<dbReference type="InterPro" id="IPR000971">
    <property type="entry name" value="Globin"/>
</dbReference>
<dbReference type="InterPro" id="IPR009050">
    <property type="entry name" value="Globin-like_sf"/>
</dbReference>
<dbReference type="InterPro" id="IPR012292">
    <property type="entry name" value="Globin/Proto"/>
</dbReference>
<dbReference type="InterPro" id="IPR001433">
    <property type="entry name" value="OxRdtase_FAD/NAD-bd"/>
</dbReference>
<dbReference type="InterPro" id="IPR017938">
    <property type="entry name" value="Riboflavin_synthase-like_b-brl"/>
</dbReference>
<dbReference type="PANTHER" id="PTHR43396">
    <property type="entry name" value="FLAVOHEMOPROTEIN"/>
    <property type="match status" value="1"/>
</dbReference>
<dbReference type="PANTHER" id="PTHR43396:SF3">
    <property type="entry name" value="FLAVOHEMOPROTEIN"/>
    <property type="match status" value="1"/>
</dbReference>
<dbReference type="Pfam" id="PF00970">
    <property type="entry name" value="FAD_binding_6"/>
    <property type="match status" value="1"/>
</dbReference>
<dbReference type="Pfam" id="PF00042">
    <property type="entry name" value="Globin"/>
    <property type="match status" value="1"/>
</dbReference>
<dbReference type="Pfam" id="PF00175">
    <property type="entry name" value="NAD_binding_1"/>
    <property type="match status" value="1"/>
</dbReference>
<dbReference type="SUPFAM" id="SSF52343">
    <property type="entry name" value="Ferredoxin reductase-like, C-terminal NADP-linked domain"/>
    <property type="match status" value="1"/>
</dbReference>
<dbReference type="SUPFAM" id="SSF46458">
    <property type="entry name" value="Globin-like"/>
    <property type="match status" value="1"/>
</dbReference>
<dbReference type="SUPFAM" id="SSF63380">
    <property type="entry name" value="Riboflavin synthase domain-like"/>
    <property type="match status" value="1"/>
</dbReference>
<dbReference type="PROSITE" id="PS51384">
    <property type="entry name" value="FAD_FR"/>
    <property type="match status" value="1"/>
</dbReference>
<dbReference type="PROSITE" id="PS01033">
    <property type="entry name" value="GLOBIN"/>
    <property type="match status" value="1"/>
</dbReference>
<proteinExistence type="inferred from homology"/>
<name>HMP_GIAIB</name>
<feature type="chain" id="PRO_0000409357" description="Flavohemoprotein">
    <location>
        <begin position="1"/>
        <end position="458"/>
    </location>
</feature>
<feature type="domain" description="Globin" evidence="2">
    <location>
        <begin position="2"/>
        <end position="158"/>
    </location>
</feature>
<feature type="domain" description="FAD-binding FR-type" evidence="3">
    <location>
        <begin position="172"/>
        <end position="279"/>
    </location>
</feature>
<feature type="region of interest" description="Reductase" evidence="1">
    <location>
        <begin position="169"/>
        <end position="457"/>
    </location>
</feature>
<feature type="active site" description="Charge relay system" evidence="1">
    <location>
        <position position="117"/>
    </location>
</feature>
<feature type="active site" description="Charge relay system" evidence="1">
    <location>
        <position position="157"/>
    </location>
</feature>
<feature type="binding site" description="proximal binding residue" evidence="2">
    <location>
        <position position="107"/>
    </location>
    <ligand>
        <name>heme b</name>
        <dbReference type="ChEBI" id="CHEBI:60344"/>
    </ligand>
    <ligandPart>
        <name>Fe</name>
        <dbReference type="ChEBI" id="CHEBI:18248"/>
    </ligandPart>
</feature>
<feature type="binding site" evidence="1">
    <location>
        <position position="211"/>
    </location>
    <ligand>
        <name>FAD</name>
        <dbReference type="ChEBI" id="CHEBI:57692"/>
    </ligand>
</feature>
<feature type="binding site" evidence="1">
    <location>
        <begin position="228"/>
        <end position="231"/>
    </location>
    <ligand>
        <name>FAD</name>
        <dbReference type="ChEBI" id="CHEBI:57692"/>
    </ligand>
</feature>
<feature type="binding site" evidence="1">
    <location>
        <begin position="320"/>
        <end position="325"/>
    </location>
    <ligand>
        <name>NADP(+)</name>
        <dbReference type="ChEBI" id="CHEBI:58349"/>
    </ligand>
</feature>
<feature type="binding site" evidence="1">
    <location>
        <begin position="450"/>
        <end position="453"/>
    </location>
    <ligand>
        <name>FAD</name>
        <dbReference type="ChEBI" id="CHEBI:57692"/>
    </ligand>
</feature>
<feature type="site" description="Involved in heme-bound ligand stabilization and O-O bond activation" evidence="1">
    <location>
        <position position="30"/>
    </location>
</feature>
<feature type="site" description="Influences the redox potential of the prosthetic heme and FAD groups" evidence="1">
    <location>
        <position position="106"/>
    </location>
</feature>
<feature type="site" description="Influences the redox potential of the prosthetic heme and FAD groups" evidence="1">
    <location>
        <position position="449"/>
    </location>
</feature>
<evidence type="ECO:0000250" key="1"/>
<evidence type="ECO:0000255" key="2">
    <source>
        <dbReference type="PROSITE-ProRule" id="PRU00238"/>
    </source>
</evidence>
<evidence type="ECO:0000255" key="3">
    <source>
        <dbReference type="PROSITE-ProRule" id="PRU00716"/>
    </source>
</evidence>
<evidence type="ECO:0000305" key="4"/>
<keyword id="KW-0216">Detoxification</keyword>
<keyword id="KW-0274">FAD</keyword>
<keyword id="KW-0285">Flavoprotein</keyword>
<keyword id="KW-0349">Heme</keyword>
<keyword id="KW-0408">Iron</keyword>
<keyword id="KW-0479">Metal-binding</keyword>
<keyword id="KW-0520">NAD</keyword>
<keyword id="KW-0521">NADP</keyword>
<keyword id="KW-0560">Oxidoreductase</keyword>
<keyword id="KW-0561">Oxygen transport</keyword>
<keyword id="KW-0813">Transport</keyword>
<reference key="1">
    <citation type="journal article" date="2009" name="PLoS Pathog.">
        <title>Draft genome sequencing of giardia intestinalis assemblage B isolate GS: is human giardiasis caused by two different species?</title>
        <authorList>
            <person name="Franzen O."/>
            <person name="Jerlstrom-Hultqvist J."/>
            <person name="Castro E."/>
            <person name="Sherwood E."/>
            <person name="Ankarklev J."/>
            <person name="Reiner D.S."/>
            <person name="Palm D."/>
            <person name="Andersson J.O."/>
            <person name="Andersson B."/>
            <person name="Svard S.G."/>
        </authorList>
    </citation>
    <scope>NUCLEOTIDE SEQUENCE [LARGE SCALE GENOMIC DNA]</scope>
    <source>
        <strain>ATCC 50581 / GS clone H7</strain>
    </source>
</reference>
<sequence>MPLSEDTIKAVEATADLVAAQGLDFTRAFYERMLTRNEELKDVFNLSHQRDLRQPKALLDSLVAYARSIRKINELHELQEQGLPVPAERLAELQGFFAVAERIAHKHASVGIQPAQYQIVGAHLLATIEERVTADKAILAAWSKAYDFLAHLFVRREEEIYTETESSEGGWRQTRSFRVEEKAQITERIFRFRLVPAEKGTAVALHKPGQYLAVFVRDPRLSPHRQIRQYSITSAPNHTYYEIAVHRDKQATVSGYLHDHVAVGDLLKLAPPYGDFFLEYREPGGQAADGQPSPEPLALHGGAVNFAAERMTPIVLISGGIGQTPLLSILRFLAEKEGQAAIRPIFWIHAAHDSRARAFKAEVDAIKVTDLPGLRTTTFLSEVDETMDKKGEDYDFAGRISLDRVPGLAELEADGANPHYFFVGPAGFMVAVEQQLKAWSVPEDRIHFEMFGPFKPLQ</sequence>
<accession>C6LR75</accession>
<organism>
    <name type="scientific">Giardia intestinalis (strain ATCC 50581 / GS clone H7)</name>
    <name type="common">Giardia lamblia</name>
    <dbReference type="NCBI Taxonomy" id="598745"/>
    <lineage>
        <taxon>Eukaryota</taxon>
        <taxon>Metamonada</taxon>
        <taxon>Diplomonadida</taxon>
        <taxon>Hexamitidae</taxon>
        <taxon>Giardiinae</taxon>
        <taxon>Giardia</taxon>
    </lineage>
</organism>
<gene>
    <name type="primary">hmpA</name>
    <name type="synonym">FLHb</name>
    <name type="ORF">GL50581_1257</name>
</gene>
<protein>
    <recommendedName>
        <fullName>Flavohemoprotein</fullName>
    </recommendedName>
    <alternativeName>
        <fullName>Flavohemoglobin</fullName>
        <shortName>FlavoHb</shortName>
    </alternativeName>
    <alternativeName>
        <fullName>Hemoglobin-like protein</fullName>
    </alternativeName>
    <alternativeName>
        <fullName>Nitric oxide dioxygenase</fullName>
        <shortName>NO oxygenase</shortName>
        <shortName>NOD</shortName>
        <ecNumber>1.14.12.17</ecNumber>
    </alternativeName>
</protein>
<comment type="function">
    <text evidence="1">Flavohemoprotein involved in nitric oxide (NO) detoxification in an aerobic process, termed nitric oxide dioxygenase (NOD) reaction that utilizes O(2) and NAD(P)H to convert NO to nitrate, which protects the protozoan parasite from various noxious nitrogen compounds. Therefore, plays a central role in the inducible response to nitrosative stress. May also be involved in O(2) detoxification (By similarity).</text>
</comment>
<comment type="catalytic activity">
    <reaction>
        <text>2 nitric oxide + NADPH + 2 O2 = 2 nitrate + NADP(+) + H(+)</text>
        <dbReference type="Rhea" id="RHEA:19465"/>
        <dbReference type="ChEBI" id="CHEBI:15378"/>
        <dbReference type="ChEBI" id="CHEBI:15379"/>
        <dbReference type="ChEBI" id="CHEBI:16480"/>
        <dbReference type="ChEBI" id="CHEBI:17632"/>
        <dbReference type="ChEBI" id="CHEBI:57783"/>
        <dbReference type="ChEBI" id="CHEBI:58349"/>
        <dbReference type="EC" id="1.14.12.17"/>
    </reaction>
</comment>
<comment type="catalytic activity">
    <reaction>
        <text>2 nitric oxide + NADH + 2 O2 = 2 nitrate + NAD(+) + H(+)</text>
        <dbReference type="Rhea" id="RHEA:19469"/>
        <dbReference type="ChEBI" id="CHEBI:15378"/>
        <dbReference type="ChEBI" id="CHEBI:15379"/>
        <dbReference type="ChEBI" id="CHEBI:16480"/>
        <dbReference type="ChEBI" id="CHEBI:17632"/>
        <dbReference type="ChEBI" id="CHEBI:57540"/>
        <dbReference type="ChEBI" id="CHEBI:57945"/>
        <dbReference type="EC" id="1.14.12.17"/>
    </reaction>
</comment>
<comment type="cofactor">
    <cofactor evidence="1">
        <name>heme b</name>
        <dbReference type="ChEBI" id="CHEBI:60344"/>
    </cofactor>
    <text evidence="1">Binds 1 heme b group.</text>
</comment>
<comment type="cofactor">
    <cofactor evidence="1">
        <name>FAD</name>
        <dbReference type="ChEBI" id="CHEBI:57692"/>
    </cofactor>
    <text evidence="1">Binds 1 FAD.</text>
</comment>
<comment type="subunit">
    <text evidence="1">Monomer.</text>
</comment>
<comment type="domain">
    <text>Consists of two distinct domains; an N-terminal heme-containing oxygen-binding domain and a C-terminal reductase domain with binding sites for FAD and NAD(P)H.</text>
</comment>
<comment type="similarity">
    <text evidence="2">Belongs to the globin family. Two-domain flavohemoproteins subfamily.</text>
</comment>
<comment type="similarity">
    <text evidence="4">In the C-terminal section; belongs to the flavoprotein pyridine nucleotide cytochrome reductase family.</text>
</comment>